<sequence length="171" mass="18081">MAGYKENNNIDNNYIEKLVNIRRVVKVVKGGRIFGFSALVVVGDGNGKVGYGTGKAREVPVAIQKAMDKARKAMKNVPLVNGTLHYSIISNVGAAKVYMQPASEGTGVIAGGPMRSVLEAVGVHNILAKCNGTRNPISVVRATVEGLTSMLSPQLVATKRGMTVDQITGEE</sequence>
<reference key="1">
    <citation type="journal article" date="2007" name="Curr. Biol.">
        <title>Reduced genome of the thioautotrophic intracellular symbiont in a deep-sea clam, Calyptogena okutanii.</title>
        <authorList>
            <person name="Kuwahara H."/>
            <person name="Yoshida T."/>
            <person name="Takaki Y."/>
            <person name="Shimamura S."/>
            <person name="Nishi S."/>
            <person name="Harada M."/>
            <person name="Matsuyama K."/>
            <person name="Takishita K."/>
            <person name="Kawato M."/>
            <person name="Uematsu K."/>
            <person name="Fujiwara Y."/>
            <person name="Sato T."/>
            <person name="Kato C."/>
            <person name="Kitagawa M."/>
            <person name="Kato I."/>
            <person name="Maruyama T."/>
        </authorList>
    </citation>
    <scope>NUCLEOTIDE SEQUENCE [LARGE SCALE GENOMIC DNA]</scope>
    <source>
        <strain>HA</strain>
    </source>
</reference>
<dbReference type="EMBL" id="AP009247">
    <property type="protein sequence ID" value="BAF61316.1"/>
    <property type="molecule type" value="Genomic_DNA"/>
</dbReference>
<dbReference type="RefSeq" id="WP_011929586.1">
    <property type="nucleotide sequence ID" value="NC_009465.1"/>
</dbReference>
<dbReference type="SMR" id="A5CXM1"/>
<dbReference type="STRING" id="412965.COSY_0186"/>
<dbReference type="KEGG" id="vok:COSY_0186"/>
<dbReference type="eggNOG" id="COG0098">
    <property type="taxonomic scope" value="Bacteria"/>
</dbReference>
<dbReference type="HOGENOM" id="CLU_065898_2_2_6"/>
<dbReference type="OrthoDB" id="9809045at2"/>
<dbReference type="Proteomes" id="UP000000247">
    <property type="component" value="Chromosome"/>
</dbReference>
<dbReference type="GO" id="GO:0015935">
    <property type="term" value="C:small ribosomal subunit"/>
    <property type="evidence" value="ECO:0007669"/>
    <property type="project" value="InterPro"/>
</dbReference>
<dbReference type="GO" id="GO:0019843">
    <property type="term" value="F:rRNA binding"/>
    <property type="evidence" value="ECO:0007669"/>
    <property type="project" value="UniProtKB-UniRule"/>
</dbReference>
<dbReference type="GO" id="GO:0003735">
    <property type="term" value="F:structural constituent of ribosome"/>
    <property type="evidence" value="ECO:0007669"/>
    <property type="project" value="InterPro"/>
</dbReference>
<dbReference type="GO" id="GO:0006412">
    <property type="term" value="P:translation"/>
    <property type="evidence" value="ECO:0007669"/>
    <property type="project" value="UniProtKB-UniRule"/>
</dbReference>
<dbReference type="FunFam" id="3.30.160.20:FF:000001">
    <property type="entry name" value="30S ribosomal protein S5"/>
    <property type="match status" value="1"/>
</dbReference>
<dbReference type="FunFam" id="3.30.230.10:FF:000002">
    <property type="entry name" value="30S ribosomal protein S5"/>
    <property type="match status" value="1"/>
</dbReference>
<dbReference type="Gene3D" id="3.30.160.20">
    <property type="match status" value="1"/>
</dbReference>
<dbReference type="Gene3D" id="3.30.230.10">
    <property type="match status" value="1"/>
</dbReference>
<dbReference type="HAMAP" id="MF_01307_B">
    <property type="entry name" value="Ribosomal_uS5_B"/>
    <property type="match status" value="1"/>
</dbReference>
<dbReference type="InterPro" id="IPR020568">
    <property type="entry name" value="Ribosomal_Su5_D2-typ_SF"/>
</dbReference>
<dbReference type="InterPro" id="IPR000851">
    <property type="entry name" value="Ribosomal_uS5"/>
</dbReference>
<dbReference type="InterPro" id="IPR005712">
    <property type="entry name" value="Ribosomal_uS5_bac-type"/>
</dbReference>
<dbReference type="InterPro" id="IPR005324">
    <property type="entry name" value="Ribosomal_uS5_C"/>
</dbReference>
<dbReference type="InterPro" id="IPR013810">
    <property type="entry name" value="Ribosomal_uS5_N"/>
</dbReference>
<dbReference type="InterPro" id="IPR018192">
    <property type="entry name" value="Ribosomal_uS5_N_CS"/>
</dbReference>
<dbReference type="InterPro" id="IPR014721">
    <property type="entry name" value="Ribsml_uS5_D2-typ_fold_subgr"/>
</dbReference>
<dbReference type="NCBIfam" id="TIGR01021">
    <property type="entry name" value="rpsE_bact"/>
    <property type="match status" value="1"/>
</dbReference>
<dbReference type="PANTHER" id="PTHR48277">
    <property type="entry name" value="MITOCHONDRIAL RIBOSOMAL PROTEIN S5"/>
    <property type="match status" value="1"/>
</dbReference>
<dbReference type="PANTHER" id="PTHR48277:SF1">
    <property type="entry name" value="MITOCHONDRIAL RIBOSOMAL PROTEIN S5"/>
    <property type="match status" value="1"/>
</dbReference>
<dbReference type="Pfam" id="PF00333">
    <property type="entry name" value="Ribosomal_S5"/>
    <property type="match status" value="1"/>
</dbReference>
<dbReference type="Pfam" id="PF03719">
    <property type="entry name" value="Ribosomal_S5_C"/>
    <property type="match status" value="1"/>
</dbReference>
<dbReference type="SUPFAM" id="SSF54768">
    <property type="entry name" value="dsRNA-binding domain-like"/>
    <property type="match status" value="1"/>
</dbReference>
<dbReference type="SUPFAM" id="SSF54211">
    <property type="entry name" value="Ribosomal protein S5 domain 2-like"/>
    <property type="match status" value="1"/>
</dbReference>
<dbReference type="PROSITE" id="PS00585">
    <property type="entry name" value="RIBOSOMAL_S5"/>
    <property type="match status" value="1"/>
</dbReference>
<dbReference type="PROSITE" id="PS50881">
    <property type="entry name" value="S5_DSRBD"/>
    <property type="match status" value="1"/>
</dbReference>
<gene>
    <name evidence="1" type="primary">rpsE</name>
    <name type="ordered locus">COSY_0186</name>
</gene>
<feature type="chain" id="PRO_0000323225" description="Small ribosomal subunit protein uS5">
    <location>
        <begin position="1"/>
        <end position="171"/>
    </location>
</feature>
<feature type="domain" description="S5 DRBM" evidence="1">
    <location>
        <begin position="14"/>
        <end position="77"/>
    </location>
</feature>
<proteinExistence type="inferred from homology"/>
<name>RS5_VESOH</name>
<protein>
    <recommendedName>
        <fullName evidence="1">Small ribosomal subunit protein uS5</fullName>
    </recommendedName>
    <alternativeName>
        <fullName evidence="2">30S ribosomal protein S5</fullName>
    </alternativeName>
</protein>
<keyword id="KW-1185">Reference proteome</keyword>
<keyword id="KW-0687">Ribonucleoprotein</keyword>
<keyword id="KW-0689">Ribosomal protein</keyword>
<keyword id="KW-0694">RNA-binding</keyword>
<keyword id="KW-0699">rRNA-binding</keyword>
<accession>A5CXM1</accession>
<evidence type="ECO:0000255" key="1">
    <source>
        <dbReference type="HAMAP-Rule" id="MF_01307"/>
    </source>
</evidence>
<evidence type="ECO:0000305" key="2"/>
<organism>
    <name type="scientific">Vesicomyosocius okutanii subsp. Calyptogena okutanii (strain HA)</name>
    <dbReference type="NCBI Taxonomy" id="412965"/>
    <lineage>
        <taxon>Bacteria</taxon>
        <taxon>Pseudomonadati</taxon>
        <taxon>Pseudomonadota</taxon>
        <taxon>Gammaproteobacteria</taxon>
        <taxon>Candidatus Pseudothioglobaceae</taxon>
        <taxon>Candidatus Vesicomyosocius</taxon>
    </lineage>
</organism>
<comment type="function">
    <text evidence="1">With S4 and S12 plays an important role in translational accuracy.</text>
</comment>
<comment type="function">
    <text evidence="1">Located at the back of the 30S subunit body where it stabilizes the conformation of the head with respect to the body.</text>
</comment>
<comment type="subunit">
    <text evidence="1">Part of the 30S ribosomal subunit. Contacts proteins S4 and S8.</text>
</comment>
<comment type="domain">
    <text>The N-terminal domain interacts with the head of the 30S subunit; the C-terminal domain interacts with the body and contacts protein S4. The interaction surface between S4 and S5 is involved in control of translational fidelity.</text>
</comment>
<comment type="similarity">
    <text evidence="1">Belongs to the universal ribosomal protein uS5 family.</text>
</comment>